<sequence>MSHSVKIYDTCIGCTQCVRACPTDVLEMIPWDGCKAKQIASAPRTEDCVGCKRCESACPTDFLSVRVYLGPETTRSMALSY</sequence>
<name>PSAC_WHEAT</name>
<reference key="1">
    <citation type="journal article" date="1988" name="Plant Mol. Biol.">
        <title>Localization and nucleotide sequence of the gene for the 8 kDa subunit of photosystem I in pea and wheat chloroplast DNA.</title>
        <authorList>
            <person name="Dunn P.P.J."/>
            <person name="Gray J.C."/>
        </authorList>
        <dbReference type="AGRICOLA" id="IND92000055"/>
    </citation>
    <scope>NUCLEOTIDE SEQUENCE [GENOMIC DNA]</scope>
</reference>
<reference key="2">
    <citation type="journal article" date="2000" name="Plant Mol. Biol. Rep.">
        <title>Chinese spring wheat (Triticum aestivum L.) chloroplast genome: complete sequence and contig clones.</title>
        <authorList>
            <person name="Ogihara Y."/>
            <person name="Isono K."/>
            <person name="Kojima T."/>
            <person name="Endo A."/>
            <person name="Hanaoka M."/>
            <person name="Shiina T."/>
            <person name="Terachi T."/>
            <person name="Utsugi S."/>
            <person name="Murata M."/>
            <person name="Mori N."/>
            <person name="Takumi S."/>
            <person name="Ikeo K."/>
            <person name="Gojobori T."/>
            <person name="Murai R."/>
            <person name="Murai K."/>
            <person name="Matsuoka Y."/>
            <person name="Ohnishi Y."/>
            <person name="Tajiri H."/>
            <person name="Tsunewaki K."/>
        </authorList>
    </citation>
    <scope>NUCLEOTIDE SEQUENCE [LARGE SCALE GENOMIC DNA]</scope>
    <source>
        <strain>cv. Chinese Spring</strain>
    </source>
</reference>
<proteinExistence type="inferred from homology"/>
<evidence type="ECO:0000250" key="1"/>
<evidence type="ECO:0000255" key="2">
    <source>
        <dbReference type="HAMAP-Rule" id="MF_01303"/>
    </source>
</evidence>
<feature type="initiator methionine" description="Removed" evidence="1">
    <location>
        <position position="1"/>
    </location>
</feature>
<feature type="chain" id="PRO_0000062007" description="Photosystem I iron-sulfur center">
    <location>
        <begin position="2"/>
        <end position="81"/>
    </location>
</feature>
<feature type="domain" description="4Fe-4S ferredoxin-type 1" evidence="2">
    <location>
        <begin position="2"/>
        <end position="31"/>
    </location>
</feature>
<feature type="domain" description="4Fe-4S ferredoxin-type 2" evidence="2">
    <location>
        <begin position="39"/>
        <end position="68"/>
    </location>
</feature>
<feature type="binding site" evidence="2">
    <location>
        <position position="11"/>
    </location>
    <ligand>
        <name>[4Fe-4S] cluster</name>
        <dbReference type="ChEBI" id="CHEBI:49883"/>
        <label>1</label>
    </ligand>
</feature>
<feature type="binding site" evidence="2">
    <location>
        <position position="14"/>
    </location>
    <ligand>
        <name>[4Fe-4S] cluster</name>
        <dbReference type="ChEBI" id="CHEBI:49883"/>
        <label>1</label>
    </ligand>
</feature>
<feature type="binding site" evidence="2">
    <location>
        <position position="17"/>
    </location>
    <ligand>
        <name>[4Fe-4S] cluster</name>
        <dbReference type="ChEBI" id="CHEBI:49883"/>
        <label>1</label>
    </ligand>
</feature>
<feature type="binding site" evidence="2">
    <location>
        <position position="21"/>
    </location>
    <ligand>
        <name>[4Fe-4S] cluster</name>
        <dbReference type="ChEBI" id="CHEBI:49883"/>
        <label>2</label>
    </ligand>
</feature>
<feature type="binding site" evidence="2">
    <location>
        <position position="48"/>
    </location>
    <ligand>
        <name>[4Fe-4S] cluster</name>
        <dbReference type="ChEBI" id="CHEBI:49883"/>
        <label>2</label>
    </ligand>
</feature>
<feature type="binding site" evidence="2">
    <location>
        <position position="51"/>
    </location>
    <ligand>
        <name>[4Fe-4S] cluster</name>
        <dbReference type="ChEBI" id="CHEBI:49883"/>
        <label>2</label>
    </ligand>
</feature>
<feature type="binding site" evidence="2">
    <location>
        <position position="54"/>
    </location>
    <ligand>
        <name>[4Fe-4S] cluster</name>
        <dbReference type="ChEBI" id="CHEBI:49883"/>
        <label>2</label>
    </ligand>
</feature>
<feature type="binding site" evidence="2">
    <location>
        <position position="58"/>
    </location>
    <ligand>
        <name>[4Fe-4S] cluster</name>
        <dbReference type="ChEBI" id="CHEBI:49883"/>
        <label>1</label>
    </ligand>
</feature>
<gene>
    <name evidence="2" type="primary">psaC</name>
</gene>
<accession>P69415</accession>
<accession>P10794</accession>
<dbReference type="EC" id="1.97.1.12" evidence="2"/>
<dbReference type="EMBL" id="X13158">
    <property type="protein sequence ID" value="CAA31555.1"/>
    <property type="molecule type" value="Genomic_DNA"/>
</dbReference>
<dbReference type="EMBL" id="AB042240">
    <property type="protein sequence ID" value="BAB47086.1"/>
    <property type="molecule type" value="Genomic_DNA"/>
</dbReference>
<dbReference type="PIR" id="S04034">
    <property type="entry name" value="FEWT1"/>
</dbReference>
<dbReference type="RefSeq" id="NP_114309.1">
    <property type="nucleotide sequence ID" value="NC_002762.1"/>
</dbReference>
<dbReference type="SMR" id="P69415"/>
<dbReference type="STRING" id="4565.P69415"/>
<dbReference type="PaxDb" id="4565-EPlTAEP00000010009"/>
<dbReference type="EnsemblPlants" id="TraesARI2D03G01115780.1">
    <property type="protein sequence ID" value="TraesARI2D03G01115780.1.CDS1"/>
    <property type="gene ID" value="TraesARI2D03G01115780"/>
</dbReference>
<dbReference type="EnsemblPlants" id="TraesARIUn03G04726370.1">
    <property type="protein sequence ID" value="TraesARIUn03G04726370.1.CDS1"/>
    <property type="gene ID" value="TraesARIUn03G04726370"/>
</dbReference>
<dbReference type="EnsemblPlants" id="TraesARIUn03G04728010.1">
    <property type="protein sequence ID" value="TraesARIUn03G04728010.1.CDS1"/>
    <property type="gene ID" value="TraesARIUn03G04728010"/>
</dbReference>
<dbReference type="EnsemblPlants" id="TraesARIUn03G04729960.1">
    <property type="protein sequence ID" value="TraesARIUn03G04729960.1.CDS1"/>
    <property type="gene ID" value="TraesARIUn03G04729960"/>
</dbReference>
<dbReference type="EnsemblPlants" id="TraesARIUn03G04731850.1">
    <property type="protein sequence ID" value="TraesARIUn03G04731850.1.CDS1"/>
    <property type="gene ID" value="TraesARIUn03G04731850"/>
</dbReference>
<dbReference type="EnsemblPlants" id="TraesCSU02G270000.1">
    <property type="protein sequence ID" value="TraesCSU02G270000.1.cds1"/>
    <property type="gene ID" value="TraesCSU02G270000"/>
</dbReference>
<dbReference type="EnsemblPlants" id="TraesCSU03G0543800.1">
    <property type="protein sequence ID" value="TraesCSU03G0543800.1.CDS1"/>
    <property type="gene ID" value="TraesCSU03G0543800"/>
</dbReference>
<dbReference type="EnsemblPlants" id="TraesJAG2D03G01103160.1">
    <property type="protein sequence ID" value="TraesJAG2D03G01103160.1.CDS1"/>
    <property type="gene ID" value="TraesJAG2D03G01103160"/>
</dbReference>
<dbReference type="EnsemblPlants" id="TraesJAG5B03G02933590.1">
    <property type="protein sequence ID" value="TraesJAG5B03G02933590.1.CDS1"/>
    <property type="gene ID" value="TraesJAG5B03G02933590"/>
</dbReference>
<dbReference type="EnsemblPlants" id="TraesJUL2D03G01105920.1">
    <property type="protein sequence ID" value="TraesJUL2D03G01105920.1.CDS1"/>
    <property type="gene ID" value="TraesJUL2D03G01105920"/>
</dbReference>
<dbReference type="EnsemblPlants" id="TraesJUL2D03G01109260.1">
    <property type="protein sequence ID" value="TraesJUL2D03G01109260.1.CDS1"/>
    <property type="gene ID" value="TraesJUL2D03G01109260"/>
</dbReference>
<dbReference type="EnsemblPlants" id="TraesKAR2D01G0025650.1">
    <property type="protein sequence ID" value="cds.TraesKAR2D01G0025650.1"/>
    <property type="gene ID" value="TraesKAR2D01G0025650"/>
</dbReference>
<dbReference type="EnsemblPlants" id="TraesKAR2D01G0029930.1">
    <property type="protein sequence ID" value="cds.TraesKAR2D01G0029930.1"/>
    <property type="gene ID" value="TraesKAR2D01G0029930"/>
</dbReference>
<dbReference type="EnsemblPlants" id="TraesKAR4A01G0000280.1">
    <property type="protein sequence ID" value="cds.TraesKAR4A01G0000280.1"/>
    <property type="gene ID" value="TraesKAR4A01G0000280"/>
</dbReference>
<dbReference type="EnsemblPlants" id="TraesKAR6B01G0219080.1">
    <property type="protein sequence ID" value="cds.TraesKAR6B01G0219080.1"/>
    <property type="gene ID" value="TraesKAR6B01G0219080"/>
</dbReference>
<dbReference type="EnsemblPlants" id="TraesKAR6B01G0220000.1">
    <property type="protein sequence ID" value="cds.TraesKAR6B01G0220000.1"/>
    <property type="gene ID" value="TraesKAR6B01G0220000"/>
</dbReference>
<dbReference type="EnsemblPlants" id="TraesKARUn01G0030570.1">
    <property type="protein sequence ID" value="cds.TraesKARUn01G0030570.1"/>
    <property type="gene ID" value="TraesKARUn01G0030570"/>
</dbReference>
<dbReference type="EnsemblPlants" id="TraesKARUn01G0030690.1">
    <property type="protein sequence ID" value="cds.TraesKARUn01G0030690.1"/>
    <property type="gene ID" value="TraesKARUn01G0030690"/>
</dbReference>
<dbReference type="EnsemblPlants" id="TraesKARUn01G0067500.1">
    <property type="protein sequence ID" value="cds.TraesKARUn01G0067500.1"/>
    <property type="gene ID" value="TraesKARUn01G0067500"/>
</dbReference>
<dbReference type="EnsemblPlants" id="TraesKARUn01G0070430.1">
    <property type="protein sequence ID" value="cds.TraesKARUn01G0070430.1"/>
    <property type="gene ID" value="TraesKARUn01G0070430"/>
</dbReference>
<dbReference type="EnsemblPlants" id="TraesKARUn01G0070770.1">
    <property type="protein sequence ID" value="cds.TraesKARUn01G0070770.1"/>
    <property type="gene ID" value="TraesKARUn01G0070770"/>
</dbReference>
<dbReference type="EnsemblPlants" id="TraesKARUn01G0078580.1">
    <property type="protein sequence ID" value="cds.TraesKARUn01G0078580.1"/>
    <property type="gene ID" value="TraesKARUn01G0078580"/>
</dbReference>
<dbReference type="EnsemblPlants" id="TraesKARUn01G0079350.1">
    <property type="protein sequence ID" value="cds.TraesKARUn01G0079350.1"/>
    <property type="gene ID" value="TraesKARUn01G0079350"/>
</dbReference>
<dbReference type="EnsemblPlants" id="TraesKARUn01G0091750.1">
    <property type="protein sequence ID" value="cds.TraesKARUn01G0091750.1"/>
    <property type="gene ID" value="TraesKARUn01G0091750"/>
</dbReference>
<dbReference type="EnsemblPlants" id="TraesKARUn01G0091940.1">
    <property type="protein sequence ID" value="cds.TraesKARUn01G0091940.1"/>
    <property type="gene ID" value="TraesKARUn01G0091940"/>
</dbReference>
<dbReference type="EnsemblPlants" id="TraesKARUn01G0092540.1">
    <property type="protein sequence ID" value="cds.TraesKARUn01G0092540.1"/>
    <property type="gene ID" value="TraesKARUn01G0092540"/>
</dbReference>
<dbReference type="EnsemblPlants" id="TraesKARUn01G0092600.1">
    <property type="protein sequence ID" value="cds.TraesKARUn01G0092600.1"/>
    <property type="gene ID" value="TraesKARUn01G0092600"/>
</dbReference>
<dbReference type="EnsemblPlants" id="TraesKARUn01G0092790.1">
    <property type="protein sequence ID" value="cds.TraesKARUn01G0092790.1"/>
    <property type="gene ID" value="TraesKARUn01G0092790"/>
</dbReference>
<dbReference type="EnsemblPlants" id="TraesKARUn01G0092860.1">
    <property type="protein sequence ID" value="cds.TraesKARUn01G0092860.1"/>
    <property type="gene ID" value="TraesKARUn01G0092860"/>
</dbReference>
<dbReference type="EnsemblPlants" id="TraesKARUn01G0101050.1">
    <property type="protein sequence ID" value="cds.TraesKARUn01G0101050.1"/>
    <property type="gene ID" value="TraesKARUn01G0101050"/>
</dbReference>
<dbReference type="EnsemblPlants" id="TraesKARUn01G0101230.1">
    <property type="protein sequence ID" value="cds.TraesKARUn01G0101230.1"/>
    <property type="gene ID" value="TraesKARUn01G0101230"/>
</dbReference>
<dbReference type="EnsemblPlants" id="TraesKARUn01G0101360.1">
    <property type="protein sequence ID" value="cds.TraesKARUn01G0101360.1"/>
    <property type="gene ID" value="TraesKARUn01G0101360"/>
</dbReference>
<dbReference type="EnsemblPlants" id="TraesKARUn01G0101440.1">
    <property type="protein sequence ID" value="cds.TraesKARUn01G0101440.1"/>
    <property type="gene ID" value="TraesKARUn01G0101440"/>
</dbReference>
<dbReference type="EnsemblPlants" id="TraesKARUn01G0101530.1">
    <property type="protein sequence ID" value="cds.TraesKARUn01G0101530.1"/>
    <property type="gene ID" value="TraesKARUn01G0101530"/>
</dbReference>
<dbReference type="EnsemblPlants" id="TraesKARUn01G0101680.1">
    <property type="protein sequence ID" value="cds.TraesKARUn01G0101680.1"/>
    <property type="gene ID" value="TraesKARUn01G0101680"/>
</dbReference>
<dbReference type="EnsemblPlants" id="TraesKARUn01G0101890.1">
    <property type="protein sequence ID" value="cds.TraesKARUn01G0101890.1"/>
    <property type="gene ID" value="TraesKARUn01G0101890"/>
</dbReference>
<dbReference type="EnsemblPlants" id="TraesKARUn01G0103210.1">
    <property type="protein sequence ID" value="cds.TraesKARUn01G0103210.1"/>
    <property type="gene ID" value="TraesKARUn01G0103210"/>
</dbReference>
<dbReference type="EnsemblPlants" id="TraesKARUn01G0103810.1">
    <property type="protein sequence ID" value="cds.TraesKARUn01G0103810.1"/>
    <property type="gene ID" value="TraesKARUn01G0103810"/>
</dbReference>
<dbReference type="EnsemblPlants" id="TraesKARUn01G0147850.1">
    <property type="protein sequence ID" value="cds.TraesKARUn01G0147850.1"/>
    <property type="gene ID" value="TraesKARUn01G0147850"/>
</dbReference>
<dbReference type="EnsemblPlants" id="TraesKARUn01G0149320.1">
    <property type="protein sequence ID" value="cds.TraesKARUn01G0149320.1"/>
    <property type="gene ID" value="TraesKARUn01G0149320"/>
</dbReference>
<dbReference type="EnsemblPlants" id="TraesKARUn01G0170630.1">
    <property type="protein sequence ID" value="cds.TraesKARUn01G0170630.1"/>
    <property type="gene ID" value="TraesKARUn01G0170630"/>
</dbReference>
<dbReference type="EnsemblPlants" id="TraesKARUn01G0171720.1">
    <property type="protein sequence ID" value="cds.TraesKARUn01G0171720.1"/>
    <property type="gene ID" value="TraesKARUn01G0171720"/>
</dbReference>
<dbReference type="EnsemblPlants" id="TraesKARUn01G0177420.1">
    <property type="protein sequence ID" value="cds.TraesKARUn01G0177420.1"/>
    <property type="gene ID" value="TraesKARUn01G0177420"/>
</dbReference>
<dbReference type="EnsemblPlants" id="TraesKARUn01G0177610.1">
    <property type="protein sequence ID" value="cds.TraesKARUn01G0177610.1"/>
    <property type="gene ID" value="TraesKARUn01G0177610"/>
</dbReference>
<dbReference type="EnsemblPlants" id="TraesKARUn01G0177850.1">
    <property type="protein sequence ID" value="cds.TraesKARUn01G0177850.1"/>
    <property type="gene ID" value="TraesKARUn01G0177850"/>
</dbReference>
<dbReference type="EnsemblPlants" id="TraesKARUn01G0178110.1">
    <property type="protein sequence ID" value="cds.TraesKARUn01G0178110.1"/>
    <property type="gene ID" value="TraesKARUn01G0178110"/>
</dbReference>
<dbReference type="EnsemblPlants" id="TraesKARUn01G0178180.1">
    <property type="protein sequence ID" value="cds.TraesKARUn01G0178180.1"/>
    <property type="gene ID" value="TraesKARUn01G0178180"/>
</dbReference>
<dbReference type="EnsemblPlants" id="TraesKARUn01G0178710.1">
    <property type="protein sequence ID" value="cds.TraesKARUn01G0178710.1"/>
    <property type="gene ID" value="TraesKARUn01G0178710"/>
</dbReference>
<dbReference type="EnsemblPlants" id="TraesLAC2D03G01051720.1">
    <property type="protein sequence ID" value="TraesLAC2D03G01051720.1.CDS1"/>
    <property type="gene ID" value="TraesLAC2D03G01051720"/>
</dbReference>
<dbReference type="EnsemblPlants" id="TraesLAC2D03G01055020.1">
    <property type="protein sequence ID" value="TraesLAC2D03G01055020.1.CDS1"/>
    <property type="gene ID" value="TraesLAC2D03G01055020"/>
</dbReference>
<dbReference type="EnsemblPlants" id="TraesLDM2D03G01101330.1">
    <property type="protein sequence ID" value="TraesLDM2D03G01101330.1.CDS1"/>
    <property type="gene ID" value="TraesLDM2D03G01101330"/>
</dbReference>
<dbReference type="EnsemblPlants" id="TraesLDM7B03G04275450.1">
    <property type="protein sequence ID" value="TraesLDM7B03G04275450.1.CDS1"/>
    <property type="gene ID" value="TraesLDM7B03G04275450"/>
</dbReference>
<dbReference type="EnsemblPlants" id="TraesLDMUn03G04590710.1">
    <property type="protein sequence ID" value="TraesLDMUn03G04590710.1.CDS1"/>
    <property type="gene ID" value="TraesLDMUn03G04590710"/>
</dbReference>
<dbReference type="EnsemblPlants" id="TraesMAC2D03G01098590.1">
    <property type="protein sequence ID" value="TraesMAC2D03G01098590.1.CDS1"/>
    <property type="gene ID" value="TraesMAC2D03G01098590"/>
</dbReference>
<dbReference type="EnsemblPlants" id="TraesMAC2D03G01101760.1">
    <property type="protein sequence ID" value="TraesMAC2D03G01101760.1.CDS1"/>
    <property type="gene ID" value="TraesMAC2D03G01101760"/>
</dbReference>
<dbReference type="EnsemblPlants" id="TraesMAC5A03G02687040.1">
    <property type="protein sequence ID" value="TraesMAC5A03G02687040.1.CDS1"/>
    <property type="gene ID" value="TraesMAC5A03G02687040"/>
</dbReference>
<dbReference type="EnsemblPlants" id="TraesNOR2D03G01115910.1">
    <property type="protein sequence ID" value="TraesNOR2D03G01115910.1.CDS1"/>
    <property type="gene ID" value="TraesNOR2D03G01115910"/>
</dbReference>
<dbReference type="EnsemblPlants" id="TraesNOR7D03G04361020.1">
    <property type="protein sequence ID" value="TraesNOR7D03G04361020.1.CDS1"/>
    <property type="gene ID" value="TraesNOR7D03G04361020"/>
</dbReference>
<dbReference type="EnsemblPlants" id="TraesNORUn03G04696910.1">
    <property type="protein sequence ID" value="TraesNORUn03G04696910.1.CDS1"/>
    <property type="gene ID" value="TraesNORUn03G04696910"/>
</dbReference>
<dbReference type="EnsemblPlants" id="TraesPARA_EIv1.0_0639980.1">
    <property type="protein sequence ID" value="TraesPARA_EIv1.0_0639980.1.CDS1"/>
    <property type="gene ID" value="TraesPARA_EIv1.0_0639980"/>
</dbReference>
<dbReference type="EnsemblPlants" id="TraesPARA_EIv1.0_2014370.1">
    <property type="protein sequence ID" value="TraesPARA_EIv1.0_2014370.1.CDS1"/>
    <property type="gene ID" value="TraesPARA_EIv1.0_2014370"/>
</dbReference>
<dbReference type="EnsemblPlants" id="TraesPARA_EIv1.0_2054690.1">
    <property type="protein sequence ID" value="TraesPARA_EIv1.0_2054690.1.CDS1"/>
    <property type="gene ID" value="TraesPARA_EIv1.0_2054690"/>
</dbReference>
<dbReference type="EnsemblPlants" id="TraesPARA_EIv1.0_2055300.1">
    <property type="protein sequence ID" value="TraesPARA_EIv1.0_2055300.1.CDS1"/>
    <property type="gene ID" value="TraesPARA_EIv1.0_2055300"/>
</dbReference>
<dbReference type="EnsemblPlants" id="TraesPARA_EIv1.0_2666150.1">
    <property type="protein sequence ID" value="TraesPARA_EIv1.0_2666150.1.CDS1"/>
    <property type="gene ID" value="TraesPARA_EIv1.0_2666150"/>
</dbReference>
<dbReference type="EnsemblPlants" id="TraesPARA_EIv1.0_2666290.1">
    <property type="protein sequence ID" value="TraesPARA_EIv1.0_2666290.1.CDS1"/>
    <property type="gene ID" value="TraesPARA_EIv1.0_2666290"/>
</dbReference>
<dbReference type="EnsemblPlants" id="TraesPARA_EIv1.0_2667870.1">
    <property type="protein sequence ID" value="TraesPARA_EIv1.0_2667870.1.CDS1"/>
    <property type="gene ID" value="TraesPARA_EIv1.0_2667870"/>
</dbReference>
<dbReference type="EnsemblPlants" id="TraesPARA_EIv1.0_2677380.1">
    <property type="protein sequence ID" value="TraesPARA_EIv1.0_2677380.1.CDS1"/>
    <property type="gene ID" value="TraesPARA_EIv1.0_2677380"/>
</dbReference>
<dbReference type="EnsemblPlants" id="TraesPARA_EIv1.0_2677670.1">
    <property type="protein sequence ID" value="TraesPARA_EIv1.0_2677670.1.CDS1"/>
    <property type="gene ID" value="TraesPARA_EIv1.0_2677670"/>
</dbReference>
<dbReference type="EnsemblPlants" id="TraesPARA_EIv1.0_2680620.1">
    <property type="protein sequence ID" value="TraesPARA_EIv1.0_2680620.1.CDS1"/>
    <property type="gene ID" value="TraesPARA_EIv1.0_2680620"/>
</dbReference>
<dbReference type="EnsemblPlants" id="TraesPARA_EIv1.0_2680920.1">
    <property type="protein sequence ID" value="TraesPARA_EIv1.0_2680920.1.CDS1"/>
    <property type="gene ID" value="TraesPARA_EIv1.0_2680920"/>
</dbReference>
<dbReference type="EnsemblPlants" id="TraesPARA_EIv1.0_2681050.1">
    <property type="protein sequence ID" value="TraesPARA_EIv1.0_2681050.1.CDS1"/>
    <property type="gene ID" value="TraesPARA_EIv1.0_2681050"/>
</dbReference>
<dbReference type="EnsemblPlants" id="TraesPARA_EIv1.0_2681590.1">
    <property type="protein sequence ID" value="TraesPARA_EIv1.0_2681590.1.CDS1"/>
    <property type="gene ID" value="TraesPARA_EIv1.0_2681590"/>
</dbReference>
<dbReference type="EnsemblPlants" id="TraesRN1D0100491900.1">
    <property type="protein sequence ID" value="TraesRN1D0100491900.1"/>
    <property type="gene ID" value="TraesRN1D0100491900"/>
</dbReference>
<dbReference type="EnsemblPlants" id="TraesRN3B0100445000.1">
    <property type="protein sequence ID" value="TraesRN3B0100445000.1"/>
    <property type="gene ID" value="TraesRN3B0100445000"/>
</dbReference>
<dbReference type="EnsemblPlants" id="TraesSTA2D03G01088340.1">
    <property type="protein sequence ID" value="TraesSTA2D03G01088340.1.CDS1"/>
    <property type="gene ID" value="TraesSTA2D03G01088340"/>
</dbReference>
<dbReference type="EnsemblPlants" id="TraesSTA7B03G04260350.1">
    <property type="protein sequence ID" value="TraesSTA7B03G04260350.1.CDS1"/>
    <property type="gene ID" value="TraesSTA7B03G04260350"/>
</dbReference>
<dbReference type="EnsemblPlants" id="TraesSYM2D03G01114100.1">
    <property type="protein sequence ID" value="TraesSYM2D03G01114100.1.CDS1"/>
    <property type="gene ID" value="TraesSYM2D03G01114100"/>
</dbReference>
<dbReference type="EnsemblPlants" id="TraesSYM2D03G01117330.1">
    <property type="protein sequence ID" value="TraesSYM2D03G01117330.1.CDS1"/>
    <property type="gene ID" value="TraesSYM2D03G01117330"/>
</dbReference>
<dbReference type="GeneID" id="803185"/>
<dbReference type="Gramene" id="TraesARI2D03G01115780.1">
    <property type="protein sequence ID" value="TraesARI2D03G01115780.1.CDS1"/>
    <property type="gene ID" value="TraesARI2D03G01115780"/>
</dbReference>
<dbReference type="Gramene" id="TraesARIUn03G04726370.1">
    <property type="protein sequence ID" value="TraesARIUn03G04726370.1.CDS1"/>
    <property type="gene ID" value="TraesARIUn03G04726370"/>
</dbReference>
<dbReference type="Gramene" id="TraesARIUn03G04728010.1">
    <property type="protein sequence ID" value="TraesARIUn03G04728010.1.CDS1"/>
    <property type="gene ID" value="TraesARIUn03G04728010"/>
</dbReference>
<dbReference type="Gramene" id="TraesARIUn03G04729960.1">
    <property type="protein sequence ID" value="TraesARIUn03G04729960.1.CDS1"/>
    <property type="gene ID" value="TraesARIUn03G04729960"/>
</dbReference>
<dbReference type="Gramene" id="TraesARIUn03G04731850.1">
    <property type="protein sequence ID" value="TraesARIUn03G04731850.1.CDS1"/>
    <property type="gene ID" value="TraesARIUn03G04731850"/>
</dbReference>
<dbReference type="Gramene" id="TraesCSU02G270000.1">
    <property type="protein sequence ID" value="TraesCSU02G270000.1.cds1"/>
    <property type="gene ID" value="TraesCSU02G270000"/>
</dbReference>
<dbReference type="Gramene" id="TraesCSU03G0543800.1">
    <property type="protein sequence ID" value="TraesCSU03G0543800.1.CDS1"/>
    <property type="gene ID" value="TraesCSU03G0543800"/>
</dbReference>
<dbReference type="Gramene" id="TraesJAG2D03G01103160.1">
    <property type="protein sequence ID" value="TraesJAG2D03G01103160.1.CDS1"/>
    <property type="gene ID" value="TraesJAG2D03G01103160"/>
</dbReference>
<dbReference type="Gramene" id="TraesJAG5B03G02933590.1">
    <property type="protein sequence ID" value="TraesJAG5B03G02933590.1.CDS1"/>
    <property type="gene ID" value="TraesJAG5B03G02933590"/>
</dbReference>
<dbReference type="Gramene" id="TraesJUL2D03G01105920.1">
    <property type="protein sequence ID" value="TraesJUL2D03G01105920.1.CDS1"/>
    <property type="gene ID" value="TraesJUL2D03G01105920"/>
</dbReference>
<dbReference type="Gramene" id="TraesJUL2D03G01109260.1">
    <property type="protein sequence ID" value="TraesJUL2D03G01109260.1.CDS1"/>
    <property type="gene ID" value="TraesJUL2D03G01109260"/>
</dbReference>
<dbReference type="Gramene" id="TraesKAR2D01G0025650.1">
    <property type="protein sequence ID" value="cds.TraesKAR2D01G0025650.1"/>
    <property type="gene ID" value="TraesKAR2D01G0025650"/>
</dbReference>
<dbReference type="Gramene" id="TraesKAR2D01G0029930.1">
    <property type="protein sequence ID" value="cds.TraesKAR2D01G0029930.1"/>
    <property type="gene ID" value="TraesKAR2D01G0029930"/>
</dbReference>
<dbReference type="Gramene" id="TraesKAR4A01G0000280.1">
    <property type="protein sequence ID" value="cds.TraesKAR4A01G0000280.1"/>
    <property type="gene ID" value="TraesKAR4A01G0000280"/>
</dbReference>
<dbReference type="Gramene" id="TraesKAR6B01G0219080.1">
    <property type="protein sequence ID" value="cds.TraesKAR6B01G0219080.1"/>
    <property type="gene ID" value="TraesKAR6B01G0219080"/>
</dbReference>
<dbReference type="Gramene" id="TraesKAR6B01G0220000.1">
    <property type="protein sequence ID" value="cds.TraesKAR6B01G0220000.1"/>
    <property type="gene ID" value="TraesKAR6B01G0220000"/>
</dbReference>
<dbReference type="Gramene" id="TraesKARUn01G0030570.1">
    <property type="protein sequence ID" value="cds.TraesKARUn01G0030570.1"/>
    <property type="gene ID" value="TraesKARUn01G0030570"/>
</dbReference>
<dbReference type="Gramene" id="TraesKARUn01G0030690.1">
    <property type="protein sequence ID" value="cds.TraesKARUn01G0030690.1"/>
    <property type="gene ID" value="TraesKARUn01G0030690"/>
</dbReference>
<dbReference type="Gramene" id="TraesKARUn01G0067500.1">
    <property type="protein sequence ID" value="cds.TraesKARUn01G0067500.1"/>
    <property type="gene ID" value="TraesKARUn01G0067500"/>
</dbReference>
<dbReference type="Gramene" id="TraesKARUn01G0070430.1">
    <property type="protein sequence ID" value="cds.TraesKARUn01G0070430.1"/>
    <property type="gene ID" value="TraesKARUn01G0070430"/>
</dbReference>
<dbReference type="Gramene" id="TraesKARUn01G0070770.1">
    <property type="protein sequence ID" value="cds.TraesKARUn01G0070770.1"/>
    <property type="gene ID" value="TraesKARUn01G0070770"/>
</dbReference>
<dbReference type="Gramene" id="TraesKARUn01G0078580.1">
    <property type="protein sequence ID" value="cds.TraesKARUn01G0078580.1"/>
    <property type="gene ID" value="TraesKARUn01G0078580"/>
</dbReference>
<dbReference type="Gramene" id="TraesKARUn01G0079350.1">
    <property type="protein sequence ID" value="cds.TraesKARUn01G0079350.1"/>
    <property type="gene ID" value="TraesKARUn01G0079350"/>
</dbReference>
<dbReference type="Gramene" id="TraesKARUn01G0091750.1">
    <property type="protein sequence ID" value="cds.TraesKARUn01G0091750.1"/>
    <property type="gene ID" value="TraesKARUn01G0091750"/>
</dbReference>
<dbReference type="Gramene" id="TraesKARUn01G0091940.1">
    <property type="protein sequence ID" value="cds.TraesKARUn01G0091940.1"/>
    <property type="gene ID" value="TraesKARUn01G0091940"/>
</dbReference>
<dbReference type="Gramene" id="TraesKARUn01G0092540.1">
    <property type="protein sequence ID" value="cds.TraesKARUn01G0092540.1"/>
    <property type="gene ID" value="TraesKARUn01G0092540"/>
</dbReference>
<dbReference type="Gramene" id="TraesKARUn01G0092600.1">
    <property type="protein sequence ID" value="cds.TraesKARUn01G0092600.1"/>
    <property type="gene ID" value="TraesKARUn01G0092600"/>
</dbReference>
<dbReference type="Gramene" id="TraesKARUn01G0092790.1">
    <property type="protein sequence ID" value="cds.TraesKARUn01G0092790.1"/>
    <property type="gene ID" value="TraesKARUn01G0092790"/>
</dbReference>
<dbReference type="Gramene" id="TraesKARUn01G0092860.1">
    <property type="protein sequence ID" value="cds.TraesKARUn01G0092860.1"/>
    <property type="gene ID" value="TraesKARUn01G0092860"/>
</dbReference>
<dbReference type="Gramene" id="TraesKARUn01G0101050.1">
    <property type="protein sequence ID" value="cds.TraesKARUn01G0101050.1"/>
    <property type="gene ID" value="TraesKARUn01G0101050"/>
</dbReference>
<dbReference type="Gramene" id="TraesKARUn01G0101230.1">
    <property type="protein sequence ID" value="cds.TraesKARUn01G0101230.1"/>
    <property type="gene ID" value="TraesKARUn01G0101230"/>
</dbReference>
<dbReference type="Gramene" id="TraesKARUn01G0101360.1">
    <property type="protein sequence ID" value="cds.TraesKARUn01G0101360.1"/>
    <property type="gene ID" value="TraesKARUn01G0101360"/>
</dbReference>
<dbReference type="Gramene" id="TraesKARUn01G0101440.1">
    <property type="protein sequence ID" value="cds.TraesKARUn01G0101440.1"/>
    <property type="gene ID" value="TraesKARUn01G0101440"/>
</dbReference>
<dbReference type="Gramene" id="TraesKARUn01G0101530.1">
    <property type="protein sequence ID" value="cds.TraesKARUn01G0101530.1"/>
    <property type="gene ID" value="TraesKARUn01G0101530"/>
</dbReference>
<dbReference type="Gramene" id="TraesKARUn01G0101680.1">
    <property type="protein sequence ID" value="cds.TraesKARUn01G0101680.1"/>
    <property type="gene ID" value="TraesKARUn01G0101680"/>
</dbReference>
<dbReference type="Gramene" id="TraesKARUn01G0101890.1">
    <property type="protein sequence ID" value="cds.TraesKARUn01G0101890.1"/>
    <property type="gene ID" value="TraesKARUn01G0101890"/>
</dbReference>
<dbReference type="Gramene" id="TraesKARUn01G0103210.1">
    <property type="protein sequence ID" value="cds.TraesKARUn01G0103210.1"/>
    <property type="gene ID" value="TraesKARUn01G0103210"/>
</dbReference>
<dbReference type="Gramene" id="TraesKARUn01G0103810.1">
    <property type="protein sequence ID" value="cds.TraesKARUn01G0103810.1"/>
    <property type="gene ID" value="TraesKARUn01G0103810"/>
</dbReference>
<dbReference type="Gramene" id="TraesKARUn01G0147850.1">
    <property type="protein sequence ID" value="cds.TraesKARUn01G0147850.1"/>
    <property type="gene ID" value="TraesKARUn01G0147850"/>
</dbReference>
<dbReference type="Gramene" id="TraesKARUn01G0149320.1">
    <property type="protein sequence ID" value="cds.TraesKARUn01G0149320.1"/>
    <property type="gene ID" value="TraesKARUn01G0149320"/>
</dbReference>
<dbReference type="Gramene" id="TraesKARUn01G0170630.1">
    <property type="protein sequence ID" value="cds.TraesKARUn01G0170630.1"/>
    <property type="gene ID" value="TraesKARUn01G0170630"/>
</dbReference>
<dbReference type="Gramene" id="TraesKARUn01G0171720.1">
    <property type="protein sequence ID" value="cds.TraesKARUn01G0171720.1"/>
    <property type="gene ID" value="TraesKARUn01G0171720"/>
</dbReference>
<dbReference type="Gramene" id="TraesKARUn01G0177420.1">
    <property type="protein sequence ID" value="cds.TraesKARUn01G0177420.1"/>
    <property type="gene ID" value="TraesKARUn01G0177420"/>
</dbReference>
<dbReference type="Gramene" id="TraesKARUn01G0177610.1">
    <property type="protein sequence ID" value="cds.TraesKARUn01G0177610.1"/>
    <property type="gene ID" value="TraesKARUn01G0177610"/>
</dbReference>
<dbReference type="Gramene" id="TraesKARUn01G0177850.1">
    <property type="protein sequence ID" value="cds.TraesKARUn01G0177850.1"/>
    <property type="gene ID" value="TraesKARUn01G0177850"/>
</dbReference>
<dbReference type="Gramene" id="TraesKARUn01G0178110.1">
    <property type="protein sequence ID" value="cds.TraesKARUn01G0178110.1"/>
    <property type="gene ID" value="TraesKARUn01G0178110"/>
</dbReference>
<dbReference type="Gramene" id="TraesKARUn01G0178180.1">
    <property type="protein sequence ID" value="cds.TraesKARUn01G0178180.1"/>
    <property type="gene ID" value="TraesKARUn01G0178180"/>
</dbReference>
<dbReference type="Gramene" id="TraesKARUn01G0178710.1">
    <property type="protein sequence ID" value="cds.TraesKARUn01G0178710.1"/>
    <property type="gene ID" value="TraesKARUn01G0178710"/>
</dbReference>
<dbReference type="Gramene" id="TraesLAC2D03G01051720.1">
    <property type="protein sequence ID" value="TraesLAC2D03G01051720.1.CDS1"/>
    <property type="gene ID" value="TraesLAC2D03G01051720"/>
</dbReference>
<dbReference type="Gramene" id="TraesLAC2D03G01055020.1">
    <property type="protein sequence ID" value="TraesLAC2D03G01055020.1.CDS1"/>
    <property type="gene ID" value="TraesLAC2D03G01055020"/>
</dbReference>
<dbReference type="Gramene" id="TraesLDM2D03G01101330.1">
    <property type="protein sequence ID" value="TraesLDM2D03G01101330.1.CDS1"/>
    <property type="gene ID" value="TraesLDM2D03G01101330"/>
</dbReference>
<dbReference type="Gramene" id="TraesLDM7B03G04275450.1">
    <property type="protein sequence ID" value="TraesLDM7B03G04275450.1.CDS1"/>
    <property type="gene ID" value="TraesLDM7B03G04275450"/>
</dbReference>
<dbReference type="Gramene" id="TraesLDMUn03G04590710.1">
    <property type="protein sequence ID" value="TraesLDMUn03G04590710.1.CDS1"/>
    <property type="gene ID" value="TraesLDMUn03G04590710"/>
</dbReference>
<dbReference type="Gramene" id="TraesMAC2D03G01098590.1">
    <property type="protein sequence ID" value="TraesMAC2D03G01098590.1.CDS1"/>
    <property type="gene ID" value="TraesMAC2D03G01098590"/>
</dbReference>
<dbReference type="Gramene" id="TraesMAC2D03G01101760.1">
    <property type="protein sequence ID" value="TraesMAC2D03G01101760.1.CDS1"/>
    <property type="gene ID" value="TraesMAC2D03G01101760"/>
</dbReference>
<dbReference type="Gramene" id="TraesMAC5A03G02687040.1">
    <property type="protein sequence ID" value="TraesMAC5A03G02687040.1.CDS1"/>
    <property type="gene ID" value="TraesMAC5A03G02687040"/>
</dbReference>
<dbReference type="Gramene" id="TraesNOR2D03G01115910.1">
    <property type="protein sequence ID" value="TraesNOR2D03G01115910.1.CDS1"/>
    <property type="gene ID" value="TraesNOR2D03G01115910"/>
</dbReference>
<dbReference type="Gramene" id="TraesNOR7D03G04361020.1">
    <property type="protein sequence ID" value="TraesNOR7D03G04361020.1.CDS1"/>
    <property type="gene ID" value="TraesNOR7D03G04361020"/>
</dbReference>
<dbReference type="Gramene" id="TraesNORUn03G04696910.1">
    <property type="protein sequence ID" value="TraesNORUn03G04696910.1.CDS1"/>
    <property type="gene ID" value="TraesNORUn03G04696910"/>
</dbReference>
<dbReference type="Gramene" id="TraesPARA_EIv1.0_0639980.1">
    <property type="protein sequence ID" value="TraesPARA_EIv1.0_0639980.1.CDS1"/>
    <property type="gene ID" value="TraesPARA_EIv1.0_0639980"/>
</dbReference>
<dbReference type="Gramene" id="TraesPARA_EIv1.0_2014370.1">
    <property type="protein sequence ID" value="TraesPARA_EIv1.0_2014370.1.CDS1"/>
    <property type="gene ID" value="TraesPARA_EIv1.0_2014370"/>
</dbReference>
<dbReference type="Gramene" id="TraesPARA_EIv1.0_2054690.1">
    <property type="protein sequence ID" value="TraesPARA_EIv1.0_2054690.1.CDS1"/>
    <property type="gene ID" value="TraesPARA_EIv1.0_2054690"/>
</dbReference>
<dbReference type="Gramene" id="TraesPARA_EIv1.0_2055300.1">
    <property type="protein sequence ID" value="TraesPARA_EIv1.0_2055300.1.CDS1"/>
    <property type="gene ID" value="TraesPARA_EIv1.0_2055300"/>
</dbReference>
<dbReference type="Gramene" id="TraesPARA_EIv1.0_2666150.1">
    <property type="protein sequence ID" value="TraesPARA_EIv1.0_2666150.1.CDS1"/>
    <property type="gene ID" value="TraesPARA_EIv1.0_2666150"/>
</dbReference>
<dbReference type="Gramene" id="TraesPARA_EIv1.0_2666290.1">
    <property type="protein sequence ID" value="TraesPARA_EIv1.0_2666290.1.CDS1"/>
    <property type="gene ID" value="TraesPARA_EIv1.0_2666290"/>
</dbReference>
<dbReference type="Gramene" id="TraesPARA_EIv1.0_2667870.1">
    <property type="protein sequence ID" value="TraesPARA_EIv1.0_2667870.1.CDS1"/>
    <property type="gene ID" value="TraesPARA_EIv1.0_2667870"/>
</dbReference>
<dbReference type="Gramene" id="TraesPARA_EIv1.0_2677380.1">
    <property type="protein sequence ID" value="TraesPARA_EIv1.0_2677380.1.CDS1"/>
    <property type="gene ID" value="TraesPARA_EIv1.0_2677380"/>
</dbReference>
<dbReference type="Gramene" id="TraesPARA_EIv1.0_2677670.1">
    <property type="protein sequence ID" value="TraesPARA_EIv1.0_2677670.1.CDS1"/>
    <property type="gene ID" value="TraesPARA_EIv1.0_2677670"/>
</dbReference>
<dbReference type="Gramene" id="TraesPARA_EIv1.0_2680620.1">
    <property type="protein sequence ID" value="TraesPARA_EIv1.0_2680620.1.CDS1"/>
    <property type="gene ID" value="TraesPARA_EIv1.0_2680620"/>
</dbReference>
<dbReference type="Gramene" id="TraesPARA_EIv1.0_2680920.1">
    <property type="protein sequence ID" value="TraesPARA_EIv1.0_2680920.1.CDS1"/>
    <property type="gene ID" value="TraesPARA_EIv1.0_2680920"/>
</dbReference>
<dbReference type="Gramene" id="TraesPARA_EIv1.0_2681050.1">
    <property type="protein sequence ID" value="TraesPARA_EIv1.0_2681050.1.CDS1"/>
    <property type="gene ID" value="TraesPARA_EIv1.0_2681050"/>
</dbReference>
<dbReference type="Gramene" id="TraesPARA_EIv1.0_2681590.1">
    <property type="protein sequence ID" value="TraesPARA_EIv1.0_2681590.1.CDS1"/>
    <property type="gene ID" value="TraesPARA_EIv1.0_2681590"/>
</dbReference>
<dbReference type="Gramene" id="TraesRN1D0100491900.1">
    <property type="protein sequence ID" value="TraesRN1D0100491900.1"/>
    <property type="gene ID" value="TraesRN1D0100491900"/>
</dbReference>
<dbReference type="Gramene" id="TraesRN3B0100445000.1">
    <property type="protein sequence ID" value="TraesRN3B0100445000.1"/>
    <property type="gene ID" value="TraesRN3B0100445000"/>
</dbReference>
<dbReference type="Gramene" id="TraesSTA2D03G01088340.1">
    <property type="protein sequence ID" value="TraesSTA2D03G01088340.1.CDS1"/>
    <property type="gene ID" value="TraesSTA2D03G01088340"/>
</dbReference>
<dbReference type="Gramene" id="TraesSTA7B03G04260350.1">
    <property type="protein sequence ID" value="TraesSTA7B03G04260350.1.CDS1"/>
    <property type="gene ID" value="TraesSTA7B03G04260350"/>
</dbReference>
<dbReference type="Gramene" id="TraesSYM2D03G01114100.1">
    <property type="protein sequence ID" value="TraesSYM2D03G01114100.1.CDS1"/>
    <property type="gene ID" value="TraesSYM2D03G01114100"/>
</dbReference>
<dbReference type="Gramene" id="TraesSYM2D03G01117330.1">
    <property type="protein sequence ID" value="TraesSYM2D03G01117330.1.CDS1"/>
    <property type="gene ID" value="TraesSYM2D03G01117330"/>
</dbReference>
<dbReference type="KEGG" id="taes:803185"/>
<dbReference type="eggNOG" id="ENOG502S26M">
    <property type="taxonomic scope" value="Eukaryota"/>
</dbReference>
<dbReference type="HOGENOM" id="CLU_139698_8_0_1"/>
<dbReference type="OMA" id="GHMSHAV"/>
<dbReference type="OrthoDB" id="1865383at2759"/>
<dbReference type="Proteomes" id="UP000019116">
    <property type="component" value="Chloroplast"/>
</dbReference>
<dbReference type="GO" id="GO:0009535">
    <property type="term" value="C:chloroplast thylakoid membrane"/>
    <property type="evidence" value="ECO:0007669"/>
    <property type="project" value="UniProtKB-SubCell"/>
</dbReference>
<dbReference type="GO" id="GO:0009522">
    <property type="term" value="C:photosystem I"/>
    <property type="evidence" value="ECO:0007669"/>
    <property type="project" value="UniProtKB-KW"/>
</dbReference>
<dbReference type="GO" id="GO:0051539">
    <property type="term" value="F:4 iron, 4 sulfur cluster binding"/>
    <property type="evidence" value="ECO:0007669"/>
    <property type="project" value="UniProtKB-KW"/>
</dbReference>
<dbReference type="GO" id="GO:0009055">
    <property type="term" value="F:electron transfer activity"/>
    <property type="evidence" value="ECO:0007669"/>
    <property type="project" value="UniProtKB-UniRule"/>
</dbReference>
<dbReference type="GO" id="GO:0046872">
    <property type="term" value="F:metal ion binding"/>
    <property type="evidence" value="ECO:0007669"/>
    <property type="project" value="UniProtKB-KW"/>
</dbReference>
<dbReference type="GO" id="GO:0016491">
    <property type="term" value="F:oxidoreductase activity"/>
    <property type="evidence" value="ECO:0007669"/>
    <property type="project" value="UniProtKB-KW"/>
</dbReference>
<dbReference type="GO" id="GO:0015979">
    <property type="term" value="P:photosynthesis"/>
    <property type="evidence" value="ECO:0000318"/>
    <property type="project" value="GO_Central"/>
</dbReference>
<dbReference type="GO" id="GO:0009773">
    <property type="term" value="P:photosynthetic electron transport in photosystem I"/>
    <property type="evidence" value="ECO:0007669"/>
    <property type="project" value="InterPro"/>
</dbReference>
<dbReference type="FunFam" id="3.30.70.20:FF:000001">
    <property type="entry name" value="Photosystem I iron-sulfur center"/>
    <property type="match status" value="1"/>
</dbReference>
<dbReference type="Gene3D" id="3.30.70.20">
    <property type="match status" value="1"/>
</dbReference>
<dbReference type="HAMAP" id="MF_01303">
    <property type="entry name" value="PSI_PsaC"/>
    <property type="match status" value="1"/>
</dbReference>
<dbReference type="InterPro" id="IPR017896">
    <property type="entry name" value="4Fe4S_Fe-S-bd"/>
</dbReference>
<dbReference type="InterPro" id="IPR017900">
    <property type="entry name" value="4Fe4S_Fe_S_CS"/>
</dbReference>
<dbReference type="InterPro" id="IPR050157">
    <property type="entry name" value="PSI_iron-sulfur_center"/>
</dbReference>
<dbReference type="InterPro" id="IPR017491">
    <property type="entry name" value="PSI_PsaC"/>
</dbReference>
<dbReference type="NCBIfam" id="TIGR03048">
    <property type="entry name" value="PS_I_psaC"/>
    <property type="match status" value="1"/>
</dbReference>
<dbReference type="PANTHER" id="PTHR24960:SF79">
    <property type="entry name" value="PHOTOSYSTEM I IRON-SULFUR CENTER"/>
    <property type="match status" value="1"/>
</dbReference>
<dbReference type="PANTHER" id="PTHR24960">
    <property type="entry name" value="PHOTOSYSTEM I IRON-SULFUR CENTER-RELATED"/>
    <property type="match status" value="1"/>
</dbReference>
<dbReference type="Pfam" id="PF12838">
    <property type="entry name" value="Fer4_7"/>
    <property type="match status" value="1"/>
</dbReference>
<dbReference type="SUPFAM" id="SSF54862">
    <property type="entry name" value="4Fe-4S ferredoxins"/>
    <property type="match status" value="1"/>
</dbReference>
<dbReference type="PROSITE" id="PS00198">
    <property type="entry name" value="4FE4S_FER_1"/>
    <property type="match status" value="2"/>
</dbReference>
<dbReference type="PROSITE" id="PS51379">
    <property type="entry name" value="4FE4S_FER_2"/>
    <property type="match status" value="2"/>
</dbReference>
<geneLocation type="chloroplast"/>
<keyword id="KW-0004">4Fe-4S</keyword>
<keyword id="KW-0150">Chloroplast</keyword>
<keyword id="KW-0249">Electron transport</keyword>
<keyword id="KW-0408">Iron</keyword>
<keyword id="KW-0411">Iron-sulfur</keyword>
<keyword id="KW-0472">Membrane</keyword>
<keyword id="KW-0479">Metal-binding</keyword>
<keyword id="KW-0560">Oxidoreductase</keyword>
<keyword id="KW-0602">Photosynthesis</keyword>
<keyword id="KW-0603">Photosystem I</keyword>
<keyword id="KW-0934">Plastid</keyword>
<keyword id="KW-1185">Reference proteome</keyword>
<keyword id="KW-0677">Repeat</keyword>
<keyword id="KW-0793">Thylakoid</keyword>
<keyword id="KW-0813">Transport</keyword>
<comment type="function">
    <text evidence="2">Apoprotein for the two 4Fe-4S centers FA and FB of photosystem I (PSI); essential for photochemical activity. FB is the terminal electron acceptor of PSI, donating electrons to ferredoxin. The C-terminus interacts with PsaA/B/D and helps assemble the protein into the PSI complex. Required for binding of PsaD and PsaE to PSI. PSI is a plastocyanin-ferredoxin oxidoreductase, converting photonic excitation into a charge separation, which transfers an electron from the donor P700 chlorophyll pair to the spectroscopically characterized acceptors A0, A1, FX, FA and FB in turn.</text>
</comment>
<comment type="catalytic activity">
    <reaction evidence="2">
        <text>reduced [plastocyanin] + hnu + oxidized [2Fe-2S]-[ferredoxin] = oxidized [plastocyanin] + reduced [2Fe-2S]-[ferredoxin]</text>
        <dbReference type="Rhea" id="RHEA:30407"/>
        <dbReference type="Rhea" id="RHEA-COMP:10000"/>
        <dbReference type="Rhea" id="RHEA-COMP:10001"/>
        <dbReference type="Rhea" id="RHEA-COMP:10039"/>
        <dbReference type="Rhea" id="RHEA-COMP:10040"/>
        <dbReference type="ChEBI" id="CHEBI:29036"/>
        <dbReference type="ChEBI" id="CHEBI:30212"/>
        <dbReference type="ChEBI" id="CHEBI:33737"/>
        <dbReference type="ChEBI" id="CHEBI:33738"/>
        <dbReference type="ChEBI" id="CHEBI:49552"/>
        <dbReference type="EC" id="1.97.1.12"/>
    </reaction>
</comment>
<comment type="cofactor">
    <cofactor evidence="2">
        <name>[4Fe-4S] cluster</name>
        <dbReference type="ChEBI" id="CHEBI:49883"/>
    </cofactor>
    <text evidence="2">Binds 2 [4Fe-4S] clusters. Cluster 2 is most probably the spectroscopically characterized electron acceptor FA and cluster 1 is most probably FB.</text>
</comment>
<comment type="subunit">
    <text evidence="2">The eukaryotic PSI reaction center is composed of at least 11 subunits.</text>
</comment>
<comment type="subcellular location">
    <subcellularLocation>
        <location evidence="2">Plastid</location>
        <location evidence="2">Chloroplast thylakoid membrane</location>
        <topology evidence="2">Peripheral membrane protein</topology>
        <orientation evidence="2">Stromal side</orientation>
    </subcellularLocation>
</comment>
<protein>
    <recommendedName>
        <fullName evidence="2">Photosystem I iron-sulfur center</fullName>
        <ecNumber evidence="2">1.97.1.12</ecNumber>
    </recommendedName>
    <alternativeName>
        <fullName evidence="2">9 kDa polypeptide</fullName>
    </alternativeName>
    <alternativeName>
        <fullName evidence="2">PSI-C</fullName>
    </alternativeName>
    <alternativeName>
        <fullName evidence="2">Photosystem I subunit VII</fullName>
    </alternativeName>
    <alternativeName>
        <fullName evidence="2">PsaC</fullName>
    </alternativeName>
</protein>
<organism>
    <name type="scientific">Triticum aestivum</name>
    <name type="common">Wheat</name>
    <dbReference type="NCBI Taxonomy" id="4565"/>
    <lineage>
        <taxon>Eukaryota</taxon>
        <taxon>Viridiplantae</taxon>
        <taxon>Streptophyta</taxon>
        <taxon>Embryophyta</taxon>
        <taxon>Tracheophyta</taxon>
        <taxon>Spermatophyta</taxon>
        <taxon>Magnoliopsida</taxon>
        <taxon>Liliopsida</taxon>
        <taxon>Poales</taxon>
        <taxon>Poaceae</taxon>
        <taxon>BOP clade</taxon>
        <taxon>Pooideae</taxon>
        <taxon>Triticodae</taxon>
        <taxon>Triticeae</taxon>
        <taxon>Triticinae</taxon>
        <taxon>Triticum</taxon>
    </lineage>
</organism>